<feature type="chain" id="PRO_1000012273" description="Lipoyl synthase">
    <location>
        <begin position="1"/>
        <end position="321"/>
    </location>
</feature>
<feature type="domain" description="Radical SAM core" evidence="2">
    <location>
        <begin position="80"/>
        <end position="297"/>
    </location>
</feature>
<feature type="binding site" evidence="1">
    <location>
        <position position="68"/>
    </location>
    <ligand>
        <name>[4Fe-4S] cluster</name>
        <dbReference type="ChEBI" id="CHEBI:49883"/>
        <label>1</label>
    </ligand>
</feature>
<feature type="binding site" evidence="1">
    <location>
        <position position="73"/>
    </location>
    <ligand>
        <name>[4Fe-4S] cluster</name>
        <dbReference type="ChEBI" id="CHEBI:49883"/>
        <label>1</label>
    </ligand>
</feature>
<feature type="binding site" evidence="1">
    <location>
        <position position="79"/>
    </location>
    <ligand>
        <name>[4Fe-4S] cluster</name>
        <dbReference type="ChEBI" id="CHEBI:49883"/>
        <label>1</label>
    </ligand>
</feature>
<feature type="binding site" evidence="1">
    <location>
        <position position="94"/>
    </location>
    <ligand>
        <name>[4Fe-4S] cluster</name>
        <dbReference type="ChEBI" id="CHEBI:49883"/>
        <label>2</label>
        <note>4Fe-4S-S-AdoMet</note>
    </ligand>
</feature>
<feature type="binding site" evidence="1">
    <location>
        <position position="98"/>
    </location>
    <ligand>
        <name>[4Fe-4S] cluster</name>
        <dbReference type="ChEBI" id="CHEBI:49883"/>
        <label>2</label>
        <note>4Fe-4S-S-AdoMet</note>
    </ligand>
</feature>
<feature type="binding site" evidence="1">
    <location>
        <position position="101"/>
    </location>
    <ligand>
        <name>[4Fe-4S] cluster</name>
        <dbReference type="ChEBI" id="CHEBI:49883"/>
        <label>2</label>
        <note>4Fe-4S-S-AdoMet</note>
    </ligand>
</feature>
<feature type="binding site" evidence="1">
    <location>
        <position position="308"/>
    </location>
    <ligand>
        <name>[4Fe-4S] cluster</name>
        <dbReference type="ChEBI" id="CHEBI:49883"/>
        <label>1</label>
    </ligand>
</feature>
<protein>
    <recommendedName>
        <fullName evidence="1">Lipoyl synthase</fullName>
        <ecNumber evidence="1">2.8.1.8</ecNumber>
    </recommendedName>
    <alternativeName>
        <fullName evidence="1">Lip-syn</fullName>
        <shortName evidence="1">LS</shortName>
    </alternativeName>
    <alternativeName>
        <fullName evidence="1">Lipoate synthase</fullName>
    </alternativeName>
    <alternativeName>
        <fullName evidence="1">Lipoic acid synthase</fullName>
    </alternativeName>
    <alternativeName>
        <fullName evidence="1">Sulfur insertion protein LipA</fullName>
    </alternativeName>
</protein>
<sequence>MNRPERLQPGVKLRDADKVSRIPVKIVPSERDTMLRKPDWLRVKLPASNQRILEIKQALRKNGLHSVCEEASCPNLAECFNHGTATFMILGAICTRRCPFCDVAHGRPLKPDAEEPVKLAQTIRDMKLKYVVITSVDRDDLRDGGAQHFADCIREIRKLNPDIKIETLVPDFRGRIDAALDILSTEPPDVFNHNLETAPMHYRKARPGANYQWSLDLLKRFKERHPNVPTKSGLMMGLGETNDEIAQVLRDLRAHKVEMLTLGQYLQPSKFHLPVERYVPPAEFDELKALADELGFTHAACGPLVRSSYHADLQAQGKEVK</sequence>
<gene>
    <name evidence="1" type="primary">lipA</name>
    <name type="ordered locus">Shew185_3324</name>
</gene>
<reference key="1">
    <citation type="submission" date="2007-07" db="EMBL/GenBank/DDBJ databases">
        <title>Complete sequence of chromosome of Shewanella baltica OS185.</title>
        <authorList>
            <consortium name="US DOE Joint Genome Institute"/>
            <person name="Copeland A."/>
            <person name="Lucas S."/>
            <person name="Lapidus A."/>
            <person name="Barry K."/>
            <person name="Glavina del Rio T."/>
            <person name="Dalin E."/>
            <person name="Tice H."/>
            <person name="Pitluck S."/>
            <person name="Sims D."/>
            <person name="Brettin T."/>
            <person name="Bruce D."/>
            <person name="Detter J.C."/>
            <person name="Han C."/>
            <person name="Schmutz J."/>
            <person name="Larimer F."/>
            <person name="Land M."/>
            <person name="Hauser L."/>
            <person name="Kyrpides N."/>
            <person name="Mikhailova N."/>
            <person name="Brettar I."/>
            <person name="Rodrigues J."/>
            <person name="Konstantinidis K."/>
            <person name="Tiedje J."/>
            <person name="Richardson P."/>
        </authorList>
    </citation>
    <scope>NUCLEOTIDE SEQUENCE [LARGE SCALE GENOMIC DNA]</scope>
    <source>
        <strain>OS185</strain>
    </source>
</reference>
<keyword id="KW-0004">4Fe-4S</keyword>
<keyword id="KW-0963">Cytoplasm</keyword>
<keyword id="KW-0408">Iron</keyword>
<keyword id="KW-0411">Iron-sulfur</keyword>
<keyword id="KW-0479">Metal-binding</keyword>
<keyword id="KW-0949">S-adenosyl-L-methionine</keyword>
<keyword id="KW-0808">Transferase</keyword>
<dbReference type="EC" id="2.8.1.8" evidence="1"/>
<dbReference type="EMBL" id="CP000753">
    <property type="protein sequence ID" value="ABS09451.1"/>
    <property type="molecule type" value="Genomic_DNA"/>
</dbReference>
<dbReference type="RefSeq" id="WP_012089945.1">
    <property type="nucleotide sequence ID" value="NC_009665.1"/>
</dbReference>
<dbReference type="SMR" id="A6WRL2"/>
<dbReference type="KEGG" id="sbm:Shew185_3324"/>
<dbReference type="HOGENOM" id="CLU_033144_2_1_6"/>
<dbReference type="UniPathway" id="UPA00538">
    <property type="reaction ID" value="UER00593"/>
</dbReference>
<dbReference type="GO" id="GO:0005737">
    <property type="term" value="C:cytoplasm"/>
    <property type="evidence" value="ECO:0007669"/>
    <property type="project" value="UniProtKB-SubCell"/>
</dbReference>
<dbReference type="GO" id="GO:0051539">
    <property type="term" value="F:4 iron, 4 sulfur cluster binding"/>
    <property type="evidence" value="ECO:0007669"/>
    <property type="project" value="UniProtKB-UniRule"/>
</dbReference>
<dbReference type="GO" id="GO:0016992">
    <property type="term" value="F:lipoate synthase activity"/>
    <property type="evidence" value="ECO:0007669"/>
    <property type="project" value="UniProtKB-UniRule"/>
</dbReference>
<dbReference type="GO" id="GO:0046872">
    <property type="term" value="F:metal ion binding"/>
    <property type="evidence" value="ECO:0007669"/>
    <property type="project" value="UniProtKB-KW"/>
</dbReference>
<dbReference type="CDD" id="cd01335">
    <property type="entry name" value="Radical_SAM"/>
    <property type="match status" value="1"/>
</dbReference>
<dbReference type="FunFam" id="3.20.20.70:FF:000023">
    <property type="entry name" value="Lipoyl synthase"/>
    <property type="match status" value="1"/>
</dbReference>
<dbReference type="Gene3D" id="3.20.20.70">
    <property type="entry name" value="Aldolase class I"/>
    <property type="match status" value="1"/>
</dbReference>
<dbReference type="HAMAP" id="MF_00206">
    <property type="entry name" value="Lipoyl_synth"/>
    <property type="match status" value="1"/>
</dbReference>
<dbReference type="InterPro" id="IPR013785">
    <property type="entry name" value="Aldolase_TIM"/>
</dbReference>
<dbReference type="InterPro" id="IPR006638">
    <property type="entry name" value="Elp3/MiaA/NifB-like_rSAM"/>
</dbReference>
<dbReference type="InterPro" id="IPR003698">
    <property type="entry name" value="Lipoyl_synth"/>
</dbReference>
<dbReference type="InterPro" id="IPR007197">
    <property type="entry name" value="rSAM"/>
</dbReference>
<dbReference type="NCBIfam" id="TIGR00510">
    <property type="entry name" value="lipA"/>
    <property type="match status" value="1"/>
</dbReference>
<dbReference type="NCBIfam" id="NF004019">
    <property type="entry name" value="PRK05481.1"/>
    <property type="match status" value="1"/>
</dbReference>
<dbReference type="NCBIfam" id="NF009544">
    <property type="entry name" value="PRK12928.1"/>
    <property type="match status" value="1"/>
</dbReference>
<dbReference type="PANTHER" id="PTHR10949">
    <property type="entry name" value="LIPOYL SYNTHASE"/>
    <property type="match status" value="1"/>
</dbReference>
<dbReference type="PANTHER" id="PTHR10949:SF0">
    <property type="entry name" value="LIPOYL SYNTHASE, MITOCHONDRIAL"/>
    <property type="match status" value="1"/>
</dbReference>
<dbReference type="Pfam" id="PF04055">
    <property type="entry name" value="Radical_SAM"/>
    <property type="match status" value="1"/>
</dbReference>
<dbReference type="PIRSF" id="PIRSF005963">
    <property type="entry name" value="Lipoyl_synth"/>
    <property type="match status" value="1"/>
</dbReference>
<dbReference type="SFLD" id="SFLDF00271">
    <property type="entry name" value="lipoyl_synthase"/>
    <property type="match status" value="1"/>
</dbReference>
<dbReference type="SFLD" id="SFLDS00029">
    <property type="entry name" value="Radical_SAM"/>
    <property type="match status" value="1"/>
</dbReference>
<dbReference type="SMART" id="SM00729">
    <property type="entry name" value="Elp3"/>
    <property type="match status" value="1"/>
</dbReference>
<dbReference type="SUPFAM" id="SSF102114">
    <property type="entry name" value="Radical SAM enzymes"/>
    <property type="match status" value="1"/>
</dbReference>
<dbReference type="PROSITE" id="PS51918">
    <property type="entry name" value="RADICAL_SAM"/>
    <property type="match status" value="1"/>
</dbReference>
<name>LIPA_SHEB8</name>
<proteinExistence type="inferred from homology"/>
<accession>A6WRL2</accession>
<evidence type="ECO:0000255" key="1">
    <source>
        <dbReference type="HAMAP-Rule" id="MF_00206"/>
    </source>
</evidence>
<evidence type="ECO:0000255" key="2">
    <source>
        <dbReference type="PROSITE-ProRule" id="PRU01266"/>
    </source>
</evidence>
<organism>
    <name type="scientific">Shewanella baltica (strain OS185)</name>
    <dbReference type="NCBI Taxonomy" id="402882"/>
    <lineage>
        <taxon>Bacteria</taxon>
        <taxon>Pseudomonadati</taxon>
        <taxon>Pseudomonadota</taxon>
        <taxon>Gammaproteobacteria</taxon>
        <taxon>Alteromonadales</taxon>
        <taxon>Shewanellaceae</taxon>
        <taxon>Shewanella</taxon>
    </lineage>
</organism>
<comment type="function">
    <text evidence="1">Catalyzes the radical-mediated insertion of two sulfur atoms into the C-6 and C-8 positions of the octanoyl moiety bound to the lipoyl domains of lipoate-dependent enzymes, thereby converting the octanoylated domains into lipoylated derivatives.</text>
</comment>
<comment type="catalytic activity">
    <reaction evidence="1">
        <text>[[Fe-S] cluster scaffold protein carrying a second [4Fe-4S](2+) cluster] + N(6)-octanoyl-L-lysyl-[protein] + 2 oxidized [2Fe-2S]-[ferredoxin] + 2 S-adenosyl-L-methionine + 4 H(+) = [[Fe-S] cluster scaffold protein] + N(6)-[(R)-dihydrolipoyl]-L-lysyl-[protein] + 4 Fe(3+) + 2 hydrogen sulfide + 2 5'-deoxyadenosine + 2 L-methionine + 2 reduced [2Fe-2S]-[ferredoxin]</text>
        <dbReference type="Rhea" id="RHEA:16585"/>
        <dbReference type="Rhea" id="RHEA-COMP:9928"/>
        <dbReference type="Rhea" id="RHEA-COMP:10000"/>
        <dbReference type="Rhea" id="RHEA-COMP:10001"/>
        <dbReference type="Rhea" id="RHEA-COMP:10475"/>
        <dbReference type="Rhea" id="RHEA-COMP:14568"/>
        <dbReference type="Rhea" id="RHEA-COMP:14569"/>
        <dbReference type="ChEBI" id="CHEBI:15378"/>
        <dbReference type="ChEBI" id="CHEBI:17319"/>
        <dbReference type="ChEBI" id="CHEBI:29034"/>
        <dbReference type="ChEBI" id="CHEBI:29919"/>
        <dbReference type="ChEBI" id="CHEBI:33722"/>
        <dbReference type="ChEBI" id="CHEBI:33737"/>
        <dbReference type="ChEBI" id="CHEBI:33738"/>
        <dbReference type="ChEBI" id="CHEBI:57844"/>
        <dbReference type="ChEBI" id="CHEBI:59789"/>
        <dbReference type="ChEBI" id="CHEBI:78809"/>
        <dbReference type="ChEBI" id="CHEBI:83100"/>
        <dbReference type="EC" id="2.8.1.8"/>
    </reaction>
</comment>
<comment type="cofactor">
    <cofactor evidence="1">
        <name>[4Fe-4S] cluster</name>
        <dbReference type="ChEBI" id="CHEBI:49883"/>
    </cofactor>
    <text evidence="1">Binds 2 [4Fe-4S] clusters per subunit. One cluster is coordinated with 3 cysteines and an exchangeable S-adenosyl-L-methionine.</text>
</comment>
<comment type="pathway">
    <text evidence="1">Protein modification; protein lipoylation via endogenous pathway; protein N(6)-(lipoyl)lysine from octanoyl-[acyl-carrier-protein]: step 2/2.</text>
</comment>
<comment type="subcellular location">
    <subcellularLocation>
        <location evidence="1">Cytoplasm</location>
    </subcellularLocation>
</comment>
<comment type="similarity">
    <text evidence="1">Belongs to the radical SAM superfamily. Lipoyl synthase family.</text>
</comment>